<reference key="1">
    <citation type="journal article" date="2001" name="Science">
        <title>Complete genome sequence of a virulent isolate of Streptococcus pneumoniae.</title>
        <authorList>
            <person name="Tettelin H."/>
            <person name="Nelson K.E."/>
            <person name="Paulsen I.T."/>
            <person name="Eisen J.A."/>
            <person name="Read T.D."/>
            <person name="Peterson S.N."/>
            <person name="Heidelberg J.F."/>
            <person name="DeBoy R.T."/>
            <person name="Haft D.H."/>
            <person name="Dodson R.J."/>
            <person name="Durkin A.S."/>
            <person name="Gwinn M.L."/>
            <person name="Kolonay J.F."/>
            <person name="Nelson W.C."/>
            <person name="Peterson J.D."/>
            <person name="Umayam L.A."/>
            <person name="White O."/>
            <person name="Salzberg S.L."/>
            <person name="Lewis M.R."/>
            <person name="Radune D."/>
            <person name="Holtzapple E.K."/>
            <person name="Khouri H.M."/>
            <person name="Wolf A.M."/>
            <person name="Utterback T.R."/>
            <person name="Hansen C.L."/>
            <person name="McDonald L.A."/>
            <person name="Feldblyum T.V."/>
            <person name="Angiuoli S.V."/>
            <person name="Dickinson T."/>
            <person name="Hickey E.K."/>
            <person name="Holt I.E."/>
            <person name="Loftus B.J."/>
            <person name="Yang F."/>
            <person name="Smith H.O."/>
            <person name="Venter J.C."/>
            <person name="Dougherty B.A."/>
            <person name="Morrison D.A."/>
            <person name="Hollingshead S.K."/>
            <person name="Fraser C.M."/>
        </authorList>
    </citation>
    <scope>NUCLEOTIDE SEQUENCE [LARGE SCALE GENOMIC DNA]</scope>
    <source>
        <strain>ATCC BAA-334 / TIGR4</strain>
    </source>
</reference>
<reference key="2">
    <citation type="journal article" date="2003" name="Structure">
        <title>The structure of chorismate synthase reveals a novel flavin binding site fundamental to a unique chemical reaction.</title>
        <authorList>
            <person name="Maclean J."/>
            <person name="Ali S."/>
        </authorList>
    </citation>
    <scope>X-RAY CRYSTALLOGRAPHY (2.00 ANGSTROMS) IN COMPLEX WITH FMN</scope>
    <scope>COFACTOR</scope>
    <scope>SUBUNIT</scope>
</reference>
<accession>P0A2Y6</accession>
<accession>Q97Q57</accession>
<sequence length="388" mass="42872">MRYLTAGESHGPRLTAIIEGIPAGLPLTAEDINEDLRRRQGGYGRGGRMKIENDQVVFTSGVRHGKTTGAPITMDVINKDHQKWLDIMSAEDIEDRLKSKRKITHPRPGHADLVGGIKYRFDDLRNSLERSSARETTMRVAVGAVAKRLLAELDMEIANHVVVFGGKEIDVPENLTVAEIKQRAAQSEVSIVNQEREQEIKDYIDQIKRDGDTIGGVVETVVGGVPVGLGSYVQWDRKLDARLAQAVVSINAFKGVEFGLGFEAGYRKGSQVMDEILWSKEDGYTRRTNNLGGFEGGMTNGQPIVVRGVMKPIPTLYKPLMSVDIETHEPYKATVERSDPTALPAAGMVMEAVVATVLAQEILEKFSSDNLEELKEAVAKHRDYTKNY</sequence>
<proteinExistence type="evidence at protein level"/>
<evidence type="ECO:0000255" key="1">
    <source>
        <dbReference type="HAMAP-Rule" id="MF_00300"/>
    </source>
</evidence>
<evidence type="ECO:0000269" key="2">
    <source>
    </source>
</evidence>
<evidence type="ECO:0007829" key="3">
    <source>
        <dbReference type="PDB" id="1QXO"/>
    </source>
</evidence>
<organism>
    <name type="scientific">Streptococcus pneumoniae serotype 4 (strain ATCC BAA-334 / TIGR4)</name>
    <dbReference type="NCBI Taxonomy" id="170187"/>
    <lineage>
        <taxon>Bacteria</taxon>
        <taxon>Bacillati</taxon>
        <taxon>Bacillota</taxon>
        <taxon>Bacilli</taxon>
        <taxon>Lactobacillales</taxon>
        <taxon>Streptococcaceae</taxon>
        <taxon>Streptococcus</taxon>
    </lineage>
</organism>
<keyword id="KW-0002">3D-structure</keyword>
<keyword id="KW-0028">Amino-acid biosynthesis</keyword>
<keyword id="KW-0057">Aromatic amino acid biosynthesis</keyword>
<keyword id="KW-0274">FAD</keyword>
<keyword id="KW-0285">Flavoprotein</keyword>
<keyword id="KW-0288">FMN</keyword>
<keyword id="KW-0456">Lyase</keyword>
<keyword id="KW-0521">NADP</keyword>
<keyword id="KW-1185">Reference proteome</keyword>
<feature type="chain" id="PRO_0000140655" description="Chorismate synthase">
    <location>
        <begin position="1"/>
        <end position="388"/>
    </location>
</feature>
<feature type="binding site" evidence="1">
    <location>
        <position position="39"/>
    </location>
    <ligand>
        <name>NADP(+)</name>
        <dbReference type="ChEBI" id="CHEBI:58349"/>
    </ligand>
</feature>
<feature type="binding site" evidence="1">
    <location>
        <position position="45"/>
    </location>
    <ligand>
        <name>NADP(+)</name>
        <dbReference type="ChEBI" id="CHEBI:58349"/>
    </ligand>
</feature>
<feature type="binding site" evidence="1">
    <location>
        <begin position="130"/>
        <end position="132"/>
    </location>
    <ligand>
        <name>FMN</name>
        <dbReference type="ChEBI" id="CHEBI:58210"/>
    </ligand>
</feature>
<feature type="binding site" evidence="1 2">
    <location>
        <begin position="251"/>
        <end position="252"/>
    </location>
    <ligand>
        <name>FMN</name>
        <dbReference type="ChEBI" id="CHEBI:58210"/>
    </ligand>
</feature>
<feature type="binding site" evidence="1 2">
    <location>
        <position position="296"/>
    </location>
    <ligand>
        <name>FMN</name>
        <dbReference type="ChEBI" id="CHEBI:58210"/>
    </ligand>
</feature>
<feature type="binding site" evidence="1 2">
    <location>
        <begin position="311"/>
        <end position="315"/>
    </location>
    <ligand>
        <name>FMN</name>
        <dbReference type="ChEBI" id="CHEBI:58210"/>
    </ligand>
</feature>
<feature type="binding site" evidence="1">
    <location>
        <position position="337"/>
    </location>
    <ligand>
        <name>FMN</name>
        <dbReference type="ChEBI" id="CHEBI:58210"/>
    </ligand>
</feature>
<feature type="strand" evidence="3">
    <location>
        <begin position="2"/>
        <end position="6"/>
    </location>
</feature>
<feature type="strand" evidence="3">
    <location>
        <begin position="11"/>
        <end position="19"/>
    </location>
</feature>
<feature type="helix" evidence="3">
    <location>
        <begin position="29"/>
        <end position="40"/>
    </location>
</feature>
<feature type="helix" evidence="3">
    <location>
        <begin position="48"/>
        <end position="51"/>
    </location>
</feature>
<feature type="strand" evidence="3">
    <location>
        <begin position="57"/>
        <end position="63"/>
    </location>
</feature>
<feature type="strand" evidence="3">
    <location>
        <begin position="72"/>
        <end position="77"/>
    </location>
</feature>
<feature type="helix" evidence="3">
    <location>
        <begin position="79"/>
        <end position="84"/>
    </location>
</feature>
<feature type="turn" evidence="3">
    <location>
        <begin position="85"/>
        <end position="88"/>
    </location>
</feature>
<feature type="helix" evidence="3">
    <location>
        <begin position="95"/>
        <end position="97"/>
    </location>
</feature>
<feature type="turn" evidence="3">
    <location>
        <begin position="98"/>
        <end position="101"/>
    </location>
</feature>
<feature type="helix" evidence="3">
    <location>
        <begin position="112"/>
        <end position="119"/>
    </location>
</feature>
<feature type="helix" evidence="3">
    <location>
        <begin position="125"/>
        <end position="131"/>
    </location>
</feature>
<feature type="helix" evidence="3">
    <location>
        <begin position="133"/>
        <end position="135"/>
    </location>
</feature>
<feature type="helix" evidence="3">
    <location>
        <begin position="136"/>
        <end position="152"/>
    </location>
</feature>
<feature type="strand" evidence="3">
    <location>
        <begin position="156"/>
        <end position="164"/>
    </location>
</feature>
<feature type="helix" evidence="3">
    <location>
        <begin position="177"/>
        <end position="185"/>
    </location>
</feature>
<feature type="helix" evidence="3">
    <location>
        <begin position="194"/>
        <end position="196"/>
    </location>
</feature>
<feature type="helix" evidence="3">
    <location>
        <begin position="197"/>
        <end position="209"/>
    </location>
</feature>
<feature type="strand" evidence="3">
    <location>
        <begin position="216"/>
        <end position="224"/>
    </location>
</feature>
<feature type="strand" evidence="3">
    <location>
        <begin position="232"/>
        <end position="234"/>
    </location>
</feature>
<feature type="helix" evidence="3">
    <location>
        <begin position="235"/>
        <end position="237"/>
    </location>
</feature>
<feature type="helix" evidence="3">
    <location>
        <begin position="239"/>
        <end position="248"/>
    </location>
</feature>
<feature type="strand" evidence="3">
    <location>
        <begin position="253"/>
        <end position="258"/>
    </location>
</feature>
<feature type="helix" evidence="3">
    <location>
        <begin position="261"/>
        <end position="266"/>
    </location>
</feature>
<feature type="helix" evidence="3">
    <location>
        <begin position="269"/>
        <end position="271"/>
    </location>
</feature>
<feature type="strand" evidence="3">
    <location>
        <begin position="276"/>
        <end position="279"/>
    </location>
</feature>
<feature type="turn" evidence="3">
    <location>
        <begin position="280"/>
        <end position="282"/>
    </location>
</feature>
<feature type="strand" evidence="3">
    <location>
        <begin position="283"/>
        <end position="287"/>
    </location>
</feature>
<feature type="turn" evidence="3">
    <location>
        <begin position="290"/>
        <end position="293"/>
    </location>
</feature>
<feature type="strand" evidence="3">
    <location>
        <begin position="304"/>
        <end position="310"/>
    </location>
</feature>
<feature type="strand" evidence="3">
    <location>
        <begin position="320"/>
        <end position="323"/>
    </location>
</feature>
<feature type="turn" evidence="3">
    <location>
        <begin position="325"/>
        <end position="327"/>
    </location>
</feature>
<feature type="strand" evidence="3">
    <location>
        <begin position="330"/>
        <end position="333"/>
    </location>
</feature>
<feature type="helix" evidence="3">
    <location>
        <begin position="343"/>
        <end position="365"/>
    </location>
</feature>
<feature type="helix" evidence="3">
    <location>
        <begin position="371"/>
        <end position="386"/>
    </location>
</feature>
<dbReference type="EC" id="4.2.3.5" evidence="1"/>
<dbReference type="EMBL" id="AE005672">
    <property type="protein sequence ID" value="AAK75472.1"/>
    <property type="molecule type" value="Genomic_DNA"/>
</dbReference>
<dbReference type="PIR" id="G95159">
    <property type="entry name" value="G95159"/>
</dbReference>
<dbReference type="RefSeq" id="WP_001269860.1">
    <property type="nucleotide sequence ID" value="NZ_CP155539.1"/>
</dbReference>
<dbReference type="PDB" id="1QXO">
    <property type="method" value="X-ray"/>
    <property type="resolution" value="2.00 A"/>
    <property type="chains" value="A/B/C/D=1-388"/>
</dbReference>
<dbReference type="PDBsum" id="1QXO"/>
<dbReference type="SMR" id="P0A2Y6"/>
<dbReference type="BindingDB" id="P0A2Y6"/>
<dbReference type="ChEMBL" id="CHEMBL4788"/>
<dbReference type="PaxDb" id="170187-SP_1374"/>
<dbReference type="EnsemblBacteria" id="AAK75472">
    <property type="protein sequence ID" value="AAK75472"/>
    <property type="gene ID" value="SP_1374"/>
</dbReference>
<dbReference type="KEGG" id="spn:SP_1374"/>
<dbReference type="eggNOG" id="COG0082">
    <property type="taxonomic scope" value="Bacteria"/>
</dbReference>
<dbReference type="PhylomeDB" id="P0A2Y6"/>
<dbReference type="BioCyc" id="SPNE170187:G1FZB-1383-MONOMER"/>
<dbReference type="BRENDA" id="4.2.3.5">
    <property type="organism ID" value="1960"/>
</dbReference>
<dbReference type="UniPathway" id="UPA00053">
    <property type="reaction ID" value="UER00090"/>
</dbReference>
<dbReference type="EvolutionaryTrace" id="P0A2Y6"/>
<dbReference type="PRO" id="PR:P0A2Y6"/>
<dbReference type="Proteomes" id="UP000000585">
    <property type="component" value="Chromosome"/>
</dbReference>
<dbReference type="GO" id="GO:0005829">
    <property type="term" value="C:cytosol"/>
    <property type="evidence" value="ECO:0007669"/>
    <property type="project" value="TreeGrafter"/>
</dbReference>
<dbReference type="GO" id="GO:0004107">
    <property type="term" value="F:chorismate synthase activity"/>
    <property type="evidence" value="ECO:0007669"/>
    <property type="project" value="UniProtKB-UniRule"/>
</dbReference>
<dbReference type="GO" id="GO:0010181">
    <property type="term" value="F:FMN binding"/>
    <property type="evidence" value="ECO:0000314"/>
    <property type="project" value="UniProtKB"/>
</dbReference>
<dbReference type="GO" id="GO:0008652">
    <property type="term" value="P:amino acid biosynthetic process"/>
    <property type="evidence" value="ECO:0007669"/>
    <property type="project" value="UniProtKB-KW"/>
</dbReference>
<dbReference type="GO" id="GO:0009073">
    <property type="term" value="P:aromatic amino acid family biosynthetic process"/>
    <property type="evidence" value="ECO:0007669"/>
    <property type="project" value="UniProtKB-KW"/>
</dbReference>
<dbReference type="GO" id="GO:0009423">
    <property type="term" value="P:chorismate biosynthetic process"/>
    <property type="evidence" value="ECO:0007669"/>
    <property type="project" value="UniProtKB-UniRule"/>
</dbReference>
<dbReference type="CDD" id="cd07304">
    <property type="entry name" value="Chorismate_synthase"/>
    <property type="match status" value="1"/>
</dbReference>
<dbReference type="FunFam" id="3.60.150.10:FF:000002">
    <property type="entry name" value="Chorismate synthase"/>
    <property type="match status" value="1"/>
</dbReference>
<dbReference type="Gene3D" id="3.60.150.10">
    <property type="entry name" value="Chorismate synthase AroC"/>
    <property type="match status" value="1"/>
</dbReference>
<dbReference type="HAMAP" id="MF_00300">
    <property type="entry name" value="Chorismate_synth"/>
    <property type="match status" value="1"/>
</dbReference>
<dbReference type="InterPro" id="IPR000453">
    <property type="entry name" value="Chorismate_synth"/>
</dbReference>
<dbReference type="InterPro" id="IPR035904">
    <property type="entry name" value="Chorismate_synth_AroC_sf"/>
</dbReference>
<dbReference type="InterPro" id="IPR020541">
    <property type="entry name" value="Chorismate_synthase_CS"/>
</dbReference>
<dbReference type="NCBIfam" id="TIGR00033">
    <property type="entry name" value="aroC"/>
    <property type="match status" value="1"/>
</dbReference>
<dbReference type="NCBIfam" id="NF003793">
    <property type="entry name" value="PRK05382.1"/>
    <property type="match status" value="1"/>
</dbReference>
<dbReference type="PANTHER" id="PTHR21085">
    <property type="entry name" value="CHORISMATE SYNTHASE"/>
    <property type="match status" value="1"/>
</dbReference>
<dbReference type="PANTHER" id="PTHR21085:SF0">
    <property type="entry name" value="CHORISMATE SYNTHASE"/>
    <property type="match status" value="1"/>
</dbReference>
<dbReference type="Pfam" id="PF01264">
    <property type="entry name" value="Chorismate_synt"/>
    <property type="match status" value="1"/>
</dbReference>
<dbReference type="PIRSF" id="PIRSF001456">
    <property type="entry name" value="Chorismate_synth"/>
    <property type="match status" value="1"/>
</dbReference>
<dbReference type="SUPFAM" id="SSF103263">
    <property type="entry name" value="Chorismate synthase, AroC"/>
    <property type="match status" value="1"/>
</dbReference>
<dbReference type="PROSITE" id="PS00787">
    <property type="entry name" value="CHORISMATE_SYNTHASE_1"/>
    <property type="match status" value="1"/>
</dbReference>
<dbReference type="PROSITE" id="PS00788">
    <property type="entry name" value="CHORISMATE_SYNTHASE_2"/>
    <property type="match status" value="1"/>
</dbReference>
<dbReference type="PROSITE" id="PS00789">
    <property type="entry name" value="CHORISMATE_SYNTHASE_3"/>
    <property type="match status" value="1"/>
</dbReference>
<gene>
    <name evidence="1" type="primary">aroC</name>
    <name type="ordered locus">SP_1374</name>
</gene>
<comment type="function">
    <text evidence="1">Catalyzes the anti-1,4-elimination of the C-3 phosphate and the C-6 proR hydrogen from 5-enolpyruvylshikimate-3-phosphate (EPSP) to yield chorismate, which is the branch point compound that serves as the starting substrate for the three terminal pathways of aromatic amino acid biosynthesis. This reaction introduces a second double bond into the aromatic ring system.</text>
</comment>
<comment type="catalytic activity">
    <reaction evidence="1">
        <text>5-O-(1-carboxyvinyl)-3-phosphoshikimate = chorismate + phosphate</text>
        <dbReference type="Rhea" id="RHEA:21020"/>
        <dbReference type="ChEBI" id="CHEBI:29748"/>
        <dbReference type="ChEBI" id="CHEBI:43474"/>
        <dbReference type="ChEBI" id="CHEBI:57701"/>
        <dbReference type="EC" id="4.2.3.5"/>
    </reaction>
</comment>
<comment type="cofactor">
    <cofactor evidence="1 2">
        <name>FMNH2</name>
        <dbReference type="ChEBI" id="CHEBI:57618"/>
    </cofactor>
    <text evidence="1 2">Reduced FMN (FMNH(2)).</text>
</comment>
<comment type="pathway">
    <text evidence="1">Metabolic intermediate biosynthesis; chorismate biosynthesis; chorismate from D-erythrose 4-phosphate and phosphoenolpyruvate: step 7/7.</text>
</comment>
<comment type="subunit">
    <text evidence="1 2">Homotetramer.</text>
</comment>
<comment type="similarity">
    <text evidence="1">Belongs to the chorismate synthase family.</text>
</comment>
<name>AROC_STRPN</name>
<protein>
    <recommendedName>
        <fullName evidence="1">Chorismate synthase</fullName>
        <shortName evidence="1">CS</shortName>
        <ecNumber evidence="1">4.2.3.5</ecNumber>
    </recommendedName>
    <alternativeName>
        <fullName evidence="1">5-enolpyruvylshikimate-3-phosphate phospholyase</fullName>
    </alternativeName>
</protein>